<reference key="1">
    <citation type="journal article" date="1996" name="EMBO J.">
        <title>Fission yeast Sop2p: a novel and evolutionarily conserved protein that interacts with Arp3p and modulates profilin function.</title>
        <authorList>
            <person name="Balasubramanian M.K."/>
            <person name="Feoktostiva A."/>
            <person name="McCollum D."/>
            <person name="Gould K.L."/>
        </authorList>
    </citation>
    <scope>NUCLEOTIDE SEQUENCE [GENOMIC DNA]</scope>
</reference>
<reference key="2">
    <citation type="journal article" date="2002" name="Nature">
        <title>The genome sequence of Schizosaccharomyces pombe.</title>
        <authorList>
            <person name="Wood V."/>
            <person name="Gwilliam R."/>
            <person name="Rajandream M.A."/>
            <person name="Lyne M.H."/>
            <person name="Lyne R."/>
            <person name="Stewart A."/>
            <person name="Sgouros J.G."/>
            <person name="Peat N."/>
            <person name="Hayles J."/>
            <person name="Baker S.G."/>
            <person name="Basham D."/>
            <person name="Bowman S."/>
            <person name="Brooks K."/>
            <person name="Brown D."/>
            <person name="Brown S."/>
            <person name="Chillingworth T."/>
            <person name="Churcher C.M."/>
            <person name="Collins M."/>
            <person name="Connor R."/>
            <person name="Cronin A."/>
            <person name="Davis P."/>
            <person name="Feltwell T."/>
            <person name="Fraser A."/>
            <person name="Gentles S."/>
            <person name="Goble A."/>
            <person name="Hamlin N."/>
            <person name="Harris D.E."/>
            <person name="Hidalgo J."/>
            <person name="Hodgson G."/>
            <person name="Holroyd S."/>
            <person name="Hornsby T."/>
            <person name="Howarth S."/>
            <person name="Huckle E.J."/>
            <person name="Hunt S."/>
            <person name="Jagels K."/>
            <person name="James K.D."/>
            <person name="Jones L."/>
            <person name="Jones M."/>
            <person name="Leather S."/>
            <person name="McDonald S."/>
            <person name="McLean J."/>
            <person name="Mooney P."/>
            <person name="Moule S."/>
            <person name="Mungall K.L."/>
            <person name="Murphy L.D."/>
            <person name="Niblett D."/>
            <person name="Odell C."/>
            <person name="Oliver K."/>
            <person name="O'Neil S."/>
            <person name="Pearson D."/>
            <person name="Quail M.A."/>
            <person name="Rabbinowitsch E."/>
            <person name="Rutherford K.M."/>
            <person name="Rutter S."/>
            <person name="Saunders D."/>
            <person name="Seeger K."/>
            <person name="Sharp S."/>
            <person name="Skelton J."/>
            <person name="Simmonds M.N."/>
            <person name="Squares R."/>
            <person name="Squares S."/>
            <person name="Stevens K."/>
            <person name="Taylor K."/>
            <person name="Taylor R.G."/>
            <person name="Tivey A."/>
            <person name="Walsh S.V."/>
            <person name="Warren T."/>
            <person name="Whitehead S."/>
            <person name="Woodward J.R."/>
            <person name="Volckaert G."/>
            <person name="Aert R."/>
            <person name="Robben J."/>
            <person name="Grymonprez B."/>
            <person name="Weltjens I."/>
            <person name="Vanstreels E."/>
            <person name="Rieger M."/>
            <person name="Schaefer M."/>
            <person name="Mueller-Auer S."/>
            <person name="Gabel C."/>
            <person name="Fuchs M."/>
            <person name="Duesterhoeft A."/>
            <person name="Fritzc C."/>
            <person name="Holzer E."/>
            <person name="Moestl D."/>
            <person name="Hilbert H."/>
            <person name="Borzym K."/>
            <person name="Langer I."/>
            <person name="Beck A."/>
            <person name="Lehrach H."/>
            <person name="Reinhardt R."/>
            <person name="Pohl T.M."/>
            <person name="Eger P."/>
            <person name="Zimmermann W."/>
            <person name="Wedler H."/>
            <person name="Wambutt R."/>
            <person name="Purnelle B."/>
            <person name="Goffeau A."/>
            <person name="Cadieu E."/>
            <person name="Dreano S."/>
            <person name="Gloux S."/>
            <person name="Lelaure V."/>
            <person name="Mottier S."/>
            <person name="Galibert F."/>
            <person name="Aves S.J."/>
            <person name="Xiang Z."/>
            <person name="Hunt C."/>
            <person name="Moore K."/>
            <person name="Hurst S.M."/>
            <person name="Lucas M."/>
            <person name="Rochet M."/>
            <person name="Gaillardin C."/>
            <person name="Tallada V.A."/>
            <person name="Garzon A."/>
            <person name="Thode G."/>
            <person name="Daga R.R."/>
            <person name="Cruzado L."/>
            <person name="Jimenez J."/>
            <person name="Sanchez M."/>
            <person name="del Rey F."/>
            <person name="Benito J."/>
            <person name="Dominguez A."/>
            <person name="Revuelta J.L."/>
            <person name="Moreno S."/>
            <person name="Armstrong J."/>
            <person name="Forsburg S.L."/>
            <person name="Cerutti L."/>
            <person name="Lowe T."/>
            <person name="McCombie W.R."/>
            <person name="Paulsen I."/>
            <person name="Potashkin J."/>
            <person name="Shpakovski G.V."/>
            <person name="Ussery D."/>
            <person name="Barrell B.G."/>
            <person name="Nurse P."/>
        </authorList>
    </citation>
    <scope>NUCLEOTIDE SEQUENCE [LARGE SCALE GENOMIC DNA]</scope>
    <source>
        <strain>972 / ATCC 24843</strain>
    </source>
</reference>
<reference key="3">
    <citation type="journal article" date="1997" name="DNA Res.">
        <title>Identification of open reading frames in Schizosaccharomyces pombe cDNAs.</title>
        <authorList>
            <person name="Yoshioka S."/>
            <person name="Kato K."/>
            <person name="Nakai K."/>
            <person name="Okayama H."/>
            <person name="Nojima H."/>
        </authorList>
    </citation>
    <scope>NUCLEOTIDE SEQUENCE [LARGE SCALE MRNA] OF 1-239</scope>
    <source>
        <strain>PR745</strain>
    </source>
</reference>
<reference key="4">
    <citation type="journal article" date="1999" name="Mol. Biol. Cell">
        <title>A mutant of arp2p causes partial disassembly of the Arp2/3 complex and loss of cortical actin function in fission yeast.</title>
        <authorList>
            <person name="Morrell J.L."/>
            <person name="Morphew M."/>
            <person name="Gould K.L."/>
        </authorList>
    </citation>
    <scope>IDENTIFICATION IN THE ARP2/3 COMPLEX</scope>
</reference>
<dbReference type="EMBL" id="Y08998">
    <property type="protein sequence ID" value="CAA70202.1"/>
    <property type="molecule type" value="Genomic_DNA"/>
</dbReference>
<dbReference type="EMBL" id="CU329671">
    <property type="protein sequence ID" value="CAA18424.1"/>
    <property type="molecule type" value="Genomic_DNA"/>
</dbReference>
<dbReference type="EMBL" id="D89122">
    <property type="protein sequence ID" value="BAA13784.1"/>
    <property type="molecule type" value="mRNA"/>
</dbReference>
<dbReference type="PIR" id="T39434">
    <property type="entry name" value="T39434"/>
</dbReference>
<dbReference type="PIR" id="T42364">
    <property type="entry name" value="T42364"/>
</dbReference>
<dbReference type="PIR" id="T45528">
    <property type="entry name" value="T45528"/>
</dbReference>
<dbReference type="RefSeq" id="NP_595909.1">
    <property type="nucleotide sequence ID" value="NM_001021817.2"/>
</dbReference>
<dbReference type="PDB" id="3DWL">
    <property type="method" value="X-ray"/>
    <property type="resolution" value="3.78 A"/>
    <property type="chains" value="C/H=1-377"/>
</dbReference>
<dbReference type="PDB" id="6W17">
    <property type="method" value="EM"/>
    <property type="resolution" value="3.90 A"/>
    <property type="chains" value="C=1-377"/>
</dbReference>
<dbReference type="PDB" id="6W18">
    <property type="method" value="EM"/>
    <property type="resolution" value="4.20 A"/>
    <property type="chains" value="C=1-377"/>
</dbReference>
<dbReference type="PDB" id="8E9B">
    <property type="method" value="EM"/>
    <property type="resolution" value="3.50 A"/>
    <property type="chains" value="C=1-377"/>
</dbReference>
<dbReference type="PDB" id="8UXW">
    <property type="method" value="EM"/>
    <property type="resolution" value="2.70 A"/>
    <property type="chains" value="C=1-377"/>
</dbReference>
<dbReference type="PDB" id="8UXX">
    <property type="method" value="EM"/>
    <property type="resolution" value="3.20 A"/>
    <property type="chains" value="C=1-377"/>
</dbReference>
<dbReference type="PDBsum" id="3DWL"/>
<dbReference type="PDBsum" id="6W17"/>
<dbReference type="PDBsum" id="6W18"/>
<dbReference type="PDBsum" id="8E9B"/>
<dbReference type="PDBsum" id="8UXW"/>
<dbReference type="PDBsum" id="8UXX"/>
<dbReference type="EMDB" id="EMD-21502"/>
<dbReference type="EMDB" id="EMD-21503"/>
<dbReference type="EMDB" id="EMD-27962"/>
<dbReference type="EMDB" id="EMD-42787"/>
<dbReference type="EMDB" id="EMD-42788"/>
<dbReference type="SMR" id="P78774"/>
<dbReference type="BioGRID" id="276546">
    <property type="interactions" value="7"/>
</dbReference>
<dbReference type="ComplexPortal" id="CPX-2474">
    <property type="entry name" value="Actin-related protein 2/3 complex"/>
</dbReference>
<dbReference type="FunCoup" id="P78774">
    <property type="interactions" value="435"/>
</dbReference>
<dbReference type="IntAct" id="P78774">
    <property type="interactions" value="3"/>
</dbReference>
<dbReference type="STRING" id="284812.P78774"/>
<dbReference type="iPTMnet" id="P78774"/>
<dbReference type="PaxDb" id="4896-SPBC14C8.06.1"/>
<dbReference type="EnsemblFungi" id="SPBC14C8.06.1">
    <property type="protein sequence ID" value="SPBC14C8.06.1:pep"/>
    <property type="gene ID" value="SPBC14C8.06"/>
</dbReference>
<dbReference type="GeneID" id="2540002"/>
<dbReference type="KEGG" id="spo:2540002"/>
<dbReference type="PomBase" id="SPBC14C8.06">
    <property type="gene designation" value="arc1"/>
</dbReference>
<dbReference type="VEuPathDB" id="FungiDB:SPBC14C8.06"/>
<dbReference type="eggNOG" id="KOG1523">
    <property type="taxonomic scope" value="Eukaryota"/>
</dbReference>
<dbReference type="HOGENOM" id="CLU_034396_1_0_1"/>
<dbReference type="InParanoid" id="P78774"/>
<dbReference type="OMA" id="YVWEPSP"/>
<dbReference type="PhylomeDB" id="P78774"/>
<dbReference type="Reactome" id="R-SPO-2029482">
    <property type="pathway name" value="Regulation of actin dynamics for phagocytic cup formation"/>
</dbReference>
<dbReference type="Reactome" id="R-SPO-5663213">
    <property type="pathway name" value="RHO GTPases Activate WASPs and WAVEs"/>
</dbReference>
<dbReference type="Reactome" id="R-SPO-8856828">
    <property type="pathway name" value="Clathrin-mediated endocytosis"/>
</dbReference>
<dbReference type="EvolutionaryTrace" id="P78774"/>
<dbReference type="PRO" id="PR:P78774"/>
<dbReference type="Proteomes" id="UP000002485">
    <property type="component" value="Chromosome II"/>
</dbReference>
<dbReference type="GO" id="GO:0030479">
    <property type="term" value="C:actin cortical patch"/>
    <property type="evidence" value="ECO:0000305"/>
    <property type="project" value="PomBase"/>
</dbReference>
<dbReference type="GO" id="GO:0005885">
    <property type="term" value="C:Arp2/3 protein complex"/>
    <property type="evidence" value="ECO:0000314"/>
    <property type="project" value="PomBase"/>
</dbReference>
<dbReference type="GO" id="GO:0032153">
    <property type="term" value="C:cell division site"/>
    <property type="evidence" value="ECO:0007005"/>
    <property type="project" value="PomBase"/>
</dbReference>
<dbReference type="GO" id="GO:0051286">
    <property type="term" value="C:cell tip"/>
    <property type="evidence" value="ECO:0007005"/>
    <property type="project" value="PomBase"/>
</dbReference>
<dbReference type="GO" id="GO:0005737">
    <property type="term" value="C:cytoplasm"/>
    <property type="evidence" value="ECO:0000314"/>
    <property type="project" value="PomBase"/>
</dbReference>
<dbReference type="GO" id="GO:0005829">
    <property type="term" value="C:cytosol"/>
    <property type="evidence" value="ECO:0007005"/>
    <property type="project" value="PomBase"/>
</dbReference>
<dbReference type="GO" id="GO:0051015">
    <property type="term" value="F:actin filament binding"/>
    <property type="evidence" value="ECO:0000314"/>
    <property type="project" value="PomBase"/>
</dbReference>
<dbReference type="GO" id="GO:0000147">
    <property type="term" value="P:actin cortical patch assembly"/>
    <property type="evidence" value="ECO:0000305"/>
    <property type="project" value="PomBase"/>
</dbReference>
<dbReference type="GO" id="GO:0090135">
    <property type="term" value="P:actin filament branching"/>
    <property type="evidence" value="ECO:0000269"/>
    <property type="project" value="PomBase"/>
</dbReference>
<dbReference type="GO" id="GO:0034314">
    <property type="term" value="P:Arp2/3 complex-mediated actin nucleation"/>
    <property type="evidence" value="ECO:0000314"/>
    <property type="project" value="PomBase"/>
</dbReference>
<dbReference type="GO" id="GO:0030866">
    <property type="term" value="P:cortical actin cytoskeleton organization"/>
    <property type="evidence" value="ECO:0000315"/>
    <property type="project" value="PomBase"/>
</dbReference>
<dbReference type="GO" id="GO:0006897">
    <property type="term" value="P:endocytosis"/>
    <property type="evidence" value="ECO:0000305"/>
    <property type="project" value="PomBase"/>
</dbReference>
<dbReference type="Gene3D" id="2.130.10.10">
    <property type="entry name" value="YVTN repeat-like/Quinoprotein amine dehydrogenase"/>
    <property type="match status" value="1"/>
</dbReference>
<dbReference type="InterPro" id="IPR017383">
    <property type="entry name" value="ARPC1"/>
</dbReference>
<dbReference type="InterPro" id="IPR015943">
    <property type="entry name" value="WD40/YVTN_repeat-like_dom_sf"/>
</dbReference>
<dbReference type="InterPro" id="IPR036322">
    <property type="entry name" value="WD40_repeat_dom_sf"/>
</dbReference>
<dbReference type="InterPro" id="IPR001680">
    <property type="entry name" value="WD40_rpt"/>
</dbReference>
<dbReference type="PANTHER" id="PTHR10709">
    <property type="entry name" value="ACTIN-RELATED PROTEIN 2/3 COMPLEX SUBUNIT 1"/>
    <property type="match status" value="1"/>
</dbReference>
<dbReference type="PANTHER" id="PTHR10709:SF2">
    <property type="entry name" value="ACTIN-RELATED PROTEIN 2_3 COMPLEX SUBUNIT"/>
    <property type="match status" value="1"/>
</dbReference>
<dbReference type="Pfam" id="PF00400">
    <property type="entry name" value="WD40"/>
    <property type="match status" value="2"/>
</dbReference>
<dbReference type="PIRSF" id="PIRSF038093">
    <property type="entry name" value="ARP2/3_su1"/>
    <property type="match status" value="1"/>
</dbReference>
<dbReference type="SMART" id="SM00320">
    <property type="entry name" value="WD40"/>
    <property type="match status" value="4"/>
</dbReference>
<dbReference type="SUPFAM" id="SSF50978">
    <property type="entry name" value="WD40 repeat-like"/>
    <property type="match status" value="1"/>
</dbReference>
<dbReference type="PROSITE" id="PS50082">
    <property type="entry name" value="WD_REPEATS_2"/>
    <property type="match status" value="1"/>
</dbReference>
<dbReference type="PROSITE" id="PS50294">
    <property type="entry name" value="WD_REPEATS_REGION"/>
    <property type="match status" value="1"/>
</dbReference>
<protein>
    <recommendedName>
        <fullName>Actin-related protein 2/3 complex subunit 1</fullName>
    </recommendedName>
    <alternativeName>
        <fullName>Arp2/3 complex 41 kDa subunit</fullName>
    </alternativeName>
    <alternativeName>
        <fullName>p41-ARC</fullName>
    </alternativeName>
</protein>
<comment type="function">
    <text evidence="1">Functions as a component of the Arp2/3 complex which is involved in regulation of actin polymerization and together with an activating nucleation-promoting factor (NPF) mediates the formation of branched actin networks.</text>
</comment>
<comment type="subunit">
    <text evidence="3">Component of the Arp2/3 complex composed of arp2, act2, arc1/p41-ARC, arc2/p34-ARC, arc3/p21-ARC, arc4/p20-ARC and arc5/p16-ARC.</text>
</comment>
<comment type="subcellular location">
    <subcellularLocation>
        <location>Cytoplasm</location>
        <location>Cytoskeleton</location>
        <location>Actin patch</location>
    </subcellularLocation>
</comment>
<comment type="similarity">
    <text evidence="4">Belongs to the WD repeat ARPC1 family.</text>
</comment>
<evidence type="ECO:0000250" key="1"/>
<evidence type="ECO:0000256" key="2">
    <source>
        <dbReference type="SAM" id="MobiDB-lite"/>
    </source>
</evidence>
<evidence type="ECO:0000269" key="3">
    <source>
    </source>
</evidence>
<evidence type="ECO:0000305" key="4"/>
<evidence type="ECO:0007829" key="5">
    <source>
        <dbReference type="PDB" id="8UXW"/>
    </source>
</evidence>
<organism>
    <name type="scientific">Schizosaccharomyces pombe (strain 972 / ATCC 24843)</name>
    <name type="common">Fission yeast</name>
    <dbReference type="NCBI Taxonomy" id="284812"/>
    <lineage>
        <taxon>Eukaryota</taxon>
        <taxon>Fungi</taxon>
        <taxon>Dikarya</taxon>
        <taxon>Ascomycota</taxon>
        <taxon>Taphrinomycotina</taxon>
        <taxon>Schizosaccharomycetes</taxon>
        <taxon>Schizosaccharomycetales</taxon>
        <taxon>Schizosaccharomycetaceae</taxon>
        <taxon>Schizosaccharomyces</taxon>
    </lineage>
</organism>
<proteinExistence type="evidence at protein level"/>
<accession>P78774</accession>
<accession>O60088</accession>
<gene>
    <name type="primary">arc1</name>
    <name type="synonym">sop2</name>
    <name type="ORF">SPBC14C8.06</name>
</gene>
<feature type="chain" id="PRO_0000050858" description="Actin-related protein 2/3 complex subunit 1">
    <location>
        <begin position="1"/>
        <end position="377"/>
    </location>
</feature>
<feature type="repeat" description="WD 1">
    <location>
        <begin position="9"/>
        <end position="48"/>
    </location>
</feature>
<feature type="repeat" description="WD 2">
    <location>
        <begin position="53"/>
        <end position="92"/>
    </location>
</feature>
<feature type="repeat" description="WD 3">
    <location>
        <begin position="98"/>
        <end position="139"/>
    </location>
</feature>
<feature type="repeat" description="WD 4">
    <location>
        <begin position="144"/>
        <end position="183"/>
    </location>
</feature>
<feature type="repeat" description="WD 5">
    <location>
        <begin position="203"/>
        <end position="242"/>
    </location>
</feature>
<feature type="repeat" description="WD 6">
    <location>
        <begin position="342"/>
        <end position="376"/>
    </location>
</feature>
<feature type="region of interest" description="Disordered" evidence="2">
    <location>
        <begin position="293"/>
        <end position="313"/>
    </location>
</feature>
<feature type="sequence conflict" description="In Ref. 3; BAA13784." evidence="4" ref="3">
    <original>N</original>
    <variation>D</variation>
    <location>
        <position position="100"/>
    </location>
</feature>
<feature type="sequence conflict" description="In Ref. 3; BAA13784." evidence="4" ref="3">
    <original>A</original>
    <variation>G</variation>
    <location>
        <position position="232"/>
    </location>
</feature>
<feature type="sequence conflict" description="In Ref. 1; CAA70202." evidence="4" ref="1">
    <original>G</original>
    <variation>V</variation>
    <location>
        <position position="306"/>
    </location>
</feature>
<feature type="strand" evidence="5">
    <location>
        <begin position="3"/>
        <end position="9"/>
    </location>
</feature>
<feature type="strand" evidence="5">
    <location>
        <begin position="15"/>
        <end position="19"/>
    </location>
</feature>
<feature type="strand" evidence="5">
    <location>
        <begin position="23"/>
        <end position="29"/>
    </location>
</feature>
<feature type="strand" evidence="5">
    <location>
        <begin position="31"/>
        <end position="33"/>
    </location>
</feature>
<feature type="strand" evidence="5">
    <location>
        <begin position="35"/>
        <end position="41"/>
    </location>
</feature>
<feature type="strand" evidence="5">
    <location>
        <begin position="44"/>
        <end position="51"/>
    </location>
</feature>
<feature type="strand" evidence="5">
    <location>
        <begin position="58"/>
        <end position="63"/>
    </location>
</feature>
<feature type="turn" evidence="5">
    <location>
        <begin position="65"/>
        <end position="67"/>
    </location>
</feature>
<feature type="strand" evidence="5">
    <location>
        <begin position="69"/>
        <end position="74"/>
    </location>
</feature>
<feature type="strand" evidence="5">
    <location>
        <begin position="79"/>
        <end position="84"/>
    </location>
</feature>
<feature type="strand" evidence="5">
    <location>
        <begin position="90"/>
        <end position="95"/>
    </location>
</feature>
<feature type="strand" evidence="5">
    <location>
        <begin position="103"/>
        <end position="108"/>
    </location>
</feature>
<feature type="strand" evidence="5">
    <location>
        <begin position="112"/>
        <end position="122"/>
    </location>
</feature>
<feature type="strand" evidence="5">
    <location>
        <begin position="124"/>
        <end position="129"/>
    </location>
</feature>
<feature type="turn" evidence="5">
    <location>
        <begin position="131"/>
        <end position="133"/>
    </location>
</feature>
<feature type="strand" evidence="5">
    <location>
        <begin position="136"/>
        <end position="141"/>
    </location>
</feature>
<feature type="strand" evidence="5">
    <location>
        <begin position="149"/>
        <end position="154"/>
    </location>
</feature>
<feature type="strand" evidence="5">
    <location>
        <begin position="160"/>
        <end position="165"/>
    </location>
</feature>
<feature type="strand" evidence="5">
    <location>
        <begin position="168"/>
        <end position="174"/>
    </location>
</feature>
<feature type="turn" evidence="5">
    <location>
        <begin position="178"/>
        <end position="180"/>
    </location>
</feature>
<feature type="strand" evidence="5">
    <location>
        <begin position="190"/>
        <end position="192"/>
    </location>
</feature>
<feature type="strand" evidence="5">
    <location>
        <begin position="198"/>
        <end position="203"/>
    </location>
</feature>
<feature type="strand" evidence="5">
    <location>
        <begin position="208"/>
        <end position="213"/>
    </location>
</feature>
<feature type="strand" evidence="5">
    <location>
        <begin position="220"/>
        <end position="224"/>
    </location>
</feature>
<feature type="turn" evidence="5">
    <location>
        <begin position="225"/>
        <end position="227"/>
    </location>
</feature>
<feature type="strand" evidence="5">
    <location>
        <begin position="228"/>
        <end position="233"/>
    </location>
</feature>
<feature type="strand" evidence="5">
    <location>
        <begin position="242"/>
        <end position="248"/>
    </location>
</feature>
<feature type="strand" evidence="5">
    <location>
        <begin position="250"/>
        <end position="252"/>
    </location>
</feature>
<feature type="strand" evidence="5">
    <location>
        <begin position="254"/>
        <end position="261"/>
    </location>
</feature>
<feature type="strand" evidence="5">
    <location>
        <begin position="264"/>
        <end position="269"/>
    </location>
</feature>
<feature type="strand" evidence="5">
    <location>
        <begin position="275"/>
        <end position="280"/>
    </location>
</feature>
<feature type="strand" evidence="5">
    <location>
        <begin position="283"/>
        <end position="290"/>
    </location>
</feature>
<feature type="helix" evidence="5">
    <location>
        <begin position="292"/>
        <end position="295"/>
    </location>
</feature>
<feature type="helix" evidence="5">
    <location>
        <begin position="317"/>
        <end position="329"/>
    </location>
</feature>
<feature type="strand" evidence="5">
    <location>
        <begin position="330"/>
        <end position="333"/>
    </location>
</feature>
<feature type="strand" evidence="5">
    <location>
        <begin position="340"/>
        <end position="342"/>
    </location>
</feature>
<feature type="strand" evidence="5">
    <location>
        <begin position="347"/>
        <end position="355"/>
    </location>
</feature>
<feature type="strand" evidence="5">
    <location>
        <begin position="362"/>
        <end position="367"/>
    </location>
</feature>
<feature type="strand" evidence="5">
    <location>
        <begin position="371"/>
        <end position="376"/>
    </location>
</feature>
<keyword id="KW-0002">3D-structure</keyword>
<keyword id="KW-0009">Actin-binding</keyword>
<keyword id="KW-0963">Cytoplasm</keyword>
<keyword id="KW-0206">Cytoskeleton</keyword>
<keyword id="KW-1185">Reference proteome</keyword>
<keyword id="KW-0677">Repeat</keyword>
<keyword id="KW-0853">WD repeat</keyword>
<name>ARPC1_SCHPO</name>
<sequence length="377" mass="41597">MATSQVLHILPKPSYEHAFNSQRTEFVTTTATNQVELYEQDGNGWKHARTFSDHDKIVTCVDWAPKSNRIVTCSQDRNAYVYEKRPDGTWKQTLVLLRLNRAATFVRWSPNEDKFAVGSGARVISVCYFEQENDWWVSKHLKRPLRSTILSLDWHPNNVLLAAGCADRKAYVLSAYVRDVDAKPEASVWGSRLPFNTVCAEYPSGGWVHAVGFSPSGNALAYAGHDSSVTIAYPSAPEQPPRALITVKLSQLPLRSLLWANESAIVAAGYNYSPILLQGNESGWAHTRDLDAGTSKTSFTHTGNTGEGREEEGPVSFTALRSTFRNMDLKGSSQSISSLPTVHQNMIATLRPYAGTPGNITAFTSSGTDGRVVLWTL</sequence>